<evidence type="ECO:0000255" key="1">
    <source>
        <dbReference type="HAMAP-Rule" id="MF_00023"/>
    </source>
</evidence>
<evidence type="ECO:0000256" key="2">
    <source>
        <dbReference type="SAM" id="MobiDB-lite"/>
    </source>
</evidence>
<feature type="chain" id="PRO_0000102969" description="SsrA-binding protein">
    <location>
        <begin position="1"/>
        <end position="156"/>
    </location>
</feature>
<feature type="region of interest" description="Disordered" evidence="2">
    <location>
        <begin position="135"/>
        <end position="156"/>
    </location>
</feature>
<feature type="compositionally biased region" description="Basic and acidic residues" evidence="2">
    <location>
        <begin position="135"/>
        <end position="150"/>
    </location>
</feature>
<protein>
    <recommendedName>
        <fullName evidence="1">SsrA-binding protein</fullName>
    </recommendedName>
    <alternativeName>
        <fullName evidence="1">Small protein B</fullName>
    </alternativeName>
</protein>
<name>SSRP_LEGPL</name>
<accession>Q5WSX5</accession>
<organism>
    <name type="scientific">Legionella pneumophila (strain Lens)</name>
    <dbReference type="NCBI Taxonomy" id="297245"/>
    <lineage>
        <taxon>Bacteria</taxon>
        <taxon>Pseudomonadati</taxon>
        <taxon>Pseudomonadota</taxon>
        <taxon>Gammaproteobacteria</taxon>
        <taxon>Legionellales</taxon>
        <taxon>Legionellaceae</taxon>
        <taxon>Legionella</taxon>
    </lineage>
</organism>
<reference key="1">
    <citation type="journal article" date="2004" name="Nat. Genet.">
        <title>Evidence in the Legionella pneumophila genome for exploitation of host cell functions and high genome plasticity.</title>
        <authorList>
            <person name="Cazalet C."/>
            <person name="Rusniok C."/>
            <person name="Brueggemann H."/>
            <person name="Zidane N."/>
            <person name="Magnier A."/>
            <person name="Ma L."/>
            <person name="Tichit M."/>
            <person name="Jarraud S."/>
            <person name="Bouchier C."/>
            <person name="Vandenesch F."/>
            <person name="Kunst F."/>
            <person name="Etienne J."/>
            <person name="Glaser P."/>
            <person name="Buchrieser C."/>
        </authorList>
    </citation>
    <scope>NUCLEOTIDE SEQUENCE [LARGE SCALE GENOMIC DNA]</scope>
    <source>
        <strain>Lens</strain>
    </source>
</reference>
<sequence length="156" mass="18047">MTTKKQPDSTIALNRKAGFDYFIEDQYEAGLVLEGWEVKSLRAGKINLSDSHVIIKYGEAFLLGAQIQPLPTASTHFIPDPVRTRKLLMNKKELNHLIGSVERQGYTIVPLSLYWKKNKIKIKIALAKGKKEHDKRDTIKDREWQRDRSRIMKKNT</sequence>
<gene>
    <name evidence="1" type="primary">smpB</name>
    <name type="ordered locus">lpl2751</name>
</gene>
<dbReference type="EMBL" id="CR628337">
    <property type="protein sequence ID" value="CAH16994.1"/>
    <property type="molecule type" value="Genomic_DNA"/>
</dbReference>
<dbReference type="RefSeq" id="WP_011216674.1">
    <property type="nucleotide sequence ID" value="NC_006369.1"/>
</dbReference>
<dbReference type="SMR" id="Q5WSX5"/>
<dbReference type="KEGG" id="lpf:lpl2751"/>
<dbReference type="LegioList" id="lpl2751"/>
<dbReference type="HOGENOM" id="CLU_108953_3_0_6"/>
<dbReference type="Proteomes" id="UP000002517">
    <property type="component" value="Chromosome"/>
</dbReference>
<dbReference type="GO" id="GO:0005829">
    <property type="term" value="C:cytosol"/>
    <property type="evidence" value="ECO:0007669"/>
    <property type="project" value="TreeGrafter"/>
</dbReference>
<dbReference type="GO" id="GO:0003723">
    <property type="term" value="F:RNA binding"/>
    <property type="evidence" value="ECO:0007669"/>
    <property type="project" value="UniProtKB-UniRule"/>
</dbReference>
<dbReference type="GO" id="GO:0070929">
    <property type="term" value="P:trans-translation"/>
    <property type="evidence" value="ECO:0007669"/>
    <property type="project" value="UniProtKB-UniRule"/>
</dbReference>
<dbReference type="CDD" id="cd09294">
    <property type="entry name" value="SmpB"/>
    <property type="match status" value="1"/>
</dbReference>
<dbReference type="Gene3D" id="2.40.280.10">
    <property type="match status" value="1"/>
</dbReference>
<dbReference type="HAMAP" id="MF_00023">
    <property type="entry name" value="SmpB"/>
    <property type="match status" value="1"/>
</dbReference>
<dbReference type="InterPro" id="IPR023620">
    <property type="entry name" value="SmpB"/>
</dbReference>
<dbReference type="InterPro" id="IPR000037">
    <property type="entry name" value="SsrA-bd_prot"/>
</dbReference>
<dbReference type="InterPro" id="IPR020081">
    <property type="entry name" value="SsrA-bd_prot_CS"/>
</dbReference>
<dbReference type="NCBIfam" id="NF003843">
    <property type="entry name" value="PRK05422.1"/>
    <property type="match status" value="1"/>
</dbReference>
<dbReference type="NCBIfam" id="TIGR00086">
    <property type="entry name" value="smpB"/>
    <property type="match status" value="1"/>
</dbReference>
<dbReference type="PANTHER" id="PTHR30308:SF2">
    <property type="entry name" value="SSRA-BINDING PROTEIN"/>
    <property type="match status" value="1"/>
</dbReference>
<dbReference type="PANTHER" id="PTHR30308">
    <property type="entry name" value="TMRNA-BINDING COMPONENT OF TRANS-TRANSLATION TAGGING COMPLEX"/>
    <property type="match status" value="1"/>
</dbReference>
<dbReference type="Pfam" id="PF01668">
    <property type="entry name" value="SmpB"/>
    <property type="match status" value="1"/>
</dbReference>
<dbReference type="SUPFAM" id="SSF74982">
    <property type="entry name" value="Small protein B (SmpB)"/>
    <property type="match status" value="1"/>
</dbReference>
<dbReference type="PROSITE" id="PS01317">
    <property type="entry name" value="SSRP"/>
    <property type="match status" value="1"/>
</dbReference>
<proteinExistence type="inferred from homology"/>
<comment type="function">
    <text evidence="1">Required for rescue of stalled ribosomes mediated by trans-translation. Binds to transfer-messenger RNA (tmRNA), required for stable association of tmRNA with ribosomes. tmRNA and SmpB together mimic tRNA shape, replacing the anticodon stem-loop with SmpB. tmRNA is encoded by the ssrA gene; the 2 termini fold to resemble tRNA(Ala) and it encodes a 'tag peptide', a short internal open reading frame. During trans-translation Ala-aminoacylated tmRNA acts like a tRNA, entering the A-site of stalled ribosomes, displacing the stalled mRNA. The ribosome then switches to translate the ORF on the tmRNA; the nascent peptide is terminated with the 'tag peptide' encoded by the tmRNA and targeted for degradation. The ribosome is freed to recommence translation, which seems to be the essential function of trans-translation.</text>
</comment>
<comment type="subcellular location">
    <subcellularLocation>
        <location evidence="1">Cytoplasm</location>
    </subcellularLocation>
    <text evidence="1">The tmRNA-SmpB complex associates with stalled 70S ribosomes.</text>
</comment>
<comment type="similarity">
    <text evidence="1">Belongs to the SmpB family.</text>
</comment>
<keyword id="KW-0963">Cytoplasm</keyword>
<keyword id="KW-0694">RNA-binding</keyword>